<proteinExistence type="inferred from homology"/>
<comment type="function">
    <text evidence="1">Catalyzes the addition and repair of the essential 3'-terminal CCA sequence in tRNAs without using a nucleic acid template. Adds these three nucleotides in the order of C, C, and A to the tRNA nucleotide-73, using CTP and ATP as substrates and producing inorganic pyrophosphate. tRNA 3'-terminal CCA addition is required both for tRNA processing and repair. Also involved in tRNA surveillance by mediating tandem CCA addition to generate a CCACCA at the 3' terminus of unstable tRNAs. While stable tRNAs receive only 3'-terminal CCA, unstable tRNAs are marked with CCACCA and rapidly degraded.</text>
</comment>
<comment type="catalytic activity">
    <reaction evidence="1">
        <text>a tRNA precursor + 2 CTP + ATP = a tRNA with a 3' CCA end + 3 diphosphate</text>
        <dbReference type="Rhea" id="RHEA:14433"/>
        <dbReference type="Rhea" id="RHEA-COMP:10465"/>
        <dbReference type="Rhea" id="RHEA-COMP:10468"/>
        <dbReference type="ChEBI" id="CHEBI:30616"/>
        <dbReference type="ChEBI" id="CHEBI:33019"/>
        <dbReference type="ChEBI" id="CHEBI:37563"/>
        <dbReference type="ChEBI" id="CHEBI:74896"/>
        <dbReference type="ChEBI" id="CHEBI:83071"/>
        <dbReference type="EC" id="2.7.7.72"/>
    </reaction>
</comment>
<comment type="catalytic activity">
    <reaction evidence="1">
        <text>a tRNA with a 3' CCA end + 2 CTP + ATP = a tRNA with a 3' CCACCA end + 3 diphosphate</text>
        <dbReference type="Rhea" id="RHEA:76235"/>
        <dbReference type="Rhea" id="RHEA-COMP:10468"/>
        <dbReference type="Rhea" id="RHEA-COMP:18655"/>
        <dbReference type="ChEBI" id="CHEBI:30616"/>
        <dbReference type="ChEBI" id="CHEBI:33019"/>
        <dbReference type="ChEBI" id="CHEBI:37563"/>
        <dbReference type="ChEBI" id="CHEBI:83071"/>
        <dbReference type="ChEBI" id="CHEBI:195187"/>
    </reaction>
    <physiologicalReaction direction="left-to-right" evidence="1">
        <dbReference type="Rhea" id="RHEA:76236"/>
    </physiologicalReaction>
</comment>
<comment type="cofactor">
    <cofactor evidence="1">
        <name>Mg(2+)</name>
        <dbReference type="ChEBI" id="CHEBI:18420"/>
    </cofactor>
</comment>
<comment type="miscellaneous">
    <text evidence="1">A single active site specifically recognizes both ATP and CTP and is responsible for their addition.</text>
</comment>
<comment type="similarity">
    <text evidence="1">Belongs to the tRNA nucleotidyltransferase/poly(A) polymerase family. Bacterial CCA-adding enzyme type 2 subfamily.</text>
</comment>
<evidence type="ECO:0000255" key="1">
    <source>
        <dbReference type="HAMAP-Rule" id="MF_01262"/>
    </source>
</evidence>
<dbReference type="EC" id="2.7.7.72" evidence="1"/>
<dbReference type="EMBL" id="CP001161">
    <property type="protein sequence ID" value="ACL30441.1"/>
    <property type="molecule type" value="Genomic_DNA"/>
</dbReference>
<dbReference type="RefSeq" id="WP_009874018.1">
    <property type="nucleotide sequence ID" value="NC_011833.1"/>
</dbReference>
<dbReference type="SMR" id="B8D8L9"/>
<dbReference type="KEGG" id="bap:BUAP5A_060"/>
<dbReference type="HOGENOM" id="CLU_015961_1_1_6"/>
<dbReference type="OrthoDB" id="9805698at2"/>
<dbReference type="Proteomes" id="UP000006904">
    <property type="component" value="Chromosome"/>
</dbReference>
<dbReference type="GO" id="GO:0005524">
    <property type="term" value="F:ATP binding"/>
    <property type="evidence" value="ECO:0007669"/>
    <property type="project" value="UniProtKB-UniRule"/>
</dbReference>
<dbReference type="GO" id="GO:0004810">
    <property type="term" value="F:CCA tRNA nucleotidyltransferase activity"/>
    <property type="evidence" value="ECO:0007669"/>
    <property type="project" value="UniProtKB-UniRule"/>
</dbReference>
<dbReference type="GO" id="GO:0000287">
    <property type="term" value="F:magnesium ion binding"/>
    <property type="evidence" value="ECO:0007669"/>
    <property type="project" value="UniProtKB-UniRule"/>
</dbReference>
<dbReference type="GO" id="GO:0000049">
    <property type="term" value="F:tRNA binding"/>
    <property type="evidence" value="ECO:0007669"/>
    <property type="project" value="UniProtKB-UniRule"/>
</dbReference>
<dbReference type="GO" id="GO:0042245">
    <property type="term" value="P:RNA repair"/>
    <property type="evidence" value="ECO:0007669"/>
    <property type="project" value="UniProtKB-KW"/>
</dbReference>
<dbReference type="GO" id="GO:0001680">
    <property type="term" value="P:tRNA 3'-terminal CCA addition"/>
    <property type="evidence" value="ECO:0007669"/>
    <property type="project" value="UniProtKB-UniRule"/>
</dbReference>
<dbReference type="Gene3D" id="3.30.460.10">
    <property type="entry name" value="Beta Polymerase, domain 2"/>
    <property type="match status" value="1"/>
</dbReference>
<dbReference type="Gene3D" id="1.10.3090.10">
    <property type="entry name" value="cca-adding enzyme, domain 2"/>
    <property type="match status" value="1"/>
</dbReference>
<dbReference type="HAMAP" id="MF_01262">
    <property type="entry name" value="CCA_bact_type2"/>
    <property type="match status" value="1"/>
</dbReference>
<dbReference type="InterPro" id="IPR012006">
    <property type="entry name" value="CCA_bact"/>
</dbReference>
<dbReference type="InterPro" id="IPR043519">
    <property type="entry name" value="NT_sf"/>
</dbReference>
<dbReference type="InterPro" id="IPR002646">
    <property type="entry name" value="PolA_pol_head_dom"/>
</dbReference>
<dbReference type="InterPro" id="IPR032828">
    <property type="entry name" value="PolyA_RNA-bd"/>
</dbReference>
<dbReference type="InterPro" id="IPR050124">
    <property type="entry name" value="tRNA_CCA-adding_enzyme"/>
</dbReference>
<dbReference type="NCBIfam" id="NF009813">
    <property type="entry name" value="PRK13298.1"/>
    <property type="match status" value="1"/>
</dbReference>
<dbReference type="PANTHER" id="PTHR47545">
    <property type="entry name" value="MULTIFUNCTIONAL CCA PROTEIN"/>
    <property type="match status" value="1"/>
</dbReference>
<dbReference type="PANTHER" id="PTHR47545:SF1">
    <property type="entry name" value="MULTIFUNCTIONAL CCA PROTEIN"/>
    <property type="match status" value="1"/>
</dbReference>
<dbReference type="Pfam" id="PF01743">
    <property type="entry name" value="PolyA_pol"/>
    <property type="match status" value="1"/>
</dbReference>
<dbReference type="Pfam" id="PF12627">
    <property type="entry name" value="PolyA_pol_RNAbd"/>
    <property type="match status" value="1"/>
</dbReference>
<dbReference type="PIRSF" id="PIRSF000813">
    <property type="entry name" value="CCA_bact"/>
    <property type="match status" value="1"/>
</dbReference>
<dbReference type="SUPFAM" id="SSF81301">
    <property type="entry name" value="Nucleotidyltransferase"/>
    <property type="match status" value="1"/>
</dbReference>
<dbReference type="SUPFAM" id="SSF81891">
    <property type="entry name" value="Poly A polymerase C-terminal region-like"/>
    <property type="match status" value="1"/>
</dbReference>
<keyword id="KW-0067">ATP-binding</keyword>
<keyword id="KW-0460">Magnesium</keyword>
<keyword id="KW-0479">Metal-binding</keyword>
<keyword id="KW-0547">Nucleotide-binding</keyword>
<keyword id="KW-0548">Nucleotidyltransferase</keyword>
<keyword id="KW-0692">RNA repair</keyword>
<keyword id="KW-0694">RNA-binding</keyword>
<keyword id="KW-0808">Transferase</keyword>
<keyword id="KW-0819">tRNA processing</keyword>
<reference key="1">
    <citation type="journal article" date="2009" name="Science">
        <title>The dynamics and time scale of ongoing genomic erosion in symbiotic bacteria.</title>
        <authorList>
            <person name="Moran N.A."/>
            <person name="McLaughlin H.J."/>
            <person name="Sorek R."/>
        </authorList>
    </citation>
    <scope>NUCLEOTIDE SEQUENCE [LARGE SCALE GENOMIC DNA]</scope>
    <source>
        <strain>5A</strain>
    </source>
</reference>
<organism>
    <name type="scientific">Buchnera aphidicola subsp. Acyrthosiphon pisum (strain 5A)</name>
    <dbReference type="NCBI Taxonomy" id="563178"/>
    <lineage>
        <taxon>Bacteria</taxon>
        <taxon>Pseudomonadati</taxon>
        <taxon>Pseudomonadota</taxon>
        <taxon>Gammaproteobacteria</taxon>
        <taxon>Enterobacterales</taxon>
        <taxon>Erwiniaceae</taxon>
        <taxon>Buchnera</taxon>
    </lineage>
</organism>
<gene>
    <name evidence="1" type="primary">cca</name>
    <name type="ordered locus">BUAP5A_060</name>
</gene>
<accession>B8D8L9</accession>
<name>CCA_BUCA5</name>
<feature type="chain" id="PRO_1000165127" description="CCA-adding enzyme">
    <location>
        <begin position="1"/>
        <end position="414"/>
    </location>
</feature>
<feature type="binding site" evidence="1">
    <location>
        <position position="8"/>
    </location>
    <ligand>
        <name>ATP</name>
        <dbReference type="ChEBI" id="CHEBI:30616"/>
    </ligand>
</feature>
<feature type="binding site" evidence="1">
    <location>
        <position position="8"/>
    </location>
    <ligand>
        <name>CTP</name>
        <dbReference type="ChEBI" id="CHEBI:37563"/>
    </ligand>
</feature>
<feature type="binding site" evidence="1">
    <location>
        <position position="11"/>
    </location>
    <ligand>
        <name>ATP</name>
        <dbReference type="ChEBI" id="CHEBI:30616"/>
    </ligand>
</feature>
<feature type="binding site" evidence="1">
    <location>
        <position position="11"/>
    </location>
    <ligand>
        <name>CTP</name>
        <dbReference type="ChEBI" id="CHEBI:37563"/>
    </ligand>
</feature>
<feature type="binding site" evidence="1">
    <location>
        <position position="21"/>
    </location>
    <ligand>
        <name>Mg(2+)</name>
        <dbReference type="ChEBI" id="CHEBI:18420"/>
    </ligand>
</feature>
<feature type="binding site" evidence="1">
    <location>
        <position position="23"/>
    </location>
    <ligand>
        <name>Mg(2+)</name>
        <dbReference type="ChEBI" id="CHEBI:18420"/>
    </ligand>
</feature>
<feature type="binding site" evidence="1">
    <location>
        <position position="91"/>
    </location>
    <ligand>
        <name>ATP</name>
        <dbReference type="ChEBI" id="CHEBI:30616"/>
    </ligand>
</feature>
<feature type="binding site" evidence="1">
    <location>
        <position position="91"/>
    </location>
    <ligand>
        <name>CTP</name>
        <dbReference type="ChEBI" id="CHEBI:37563"/>
    </ligand>
</feature>
<feature type="binding site" evidence="1">
    <location>
        <position position="137"/>
    </location>
    <ligand>
        <name>ATP</name>
        <dbReference type="ChEBI" id="CHEBI:30616"/>
    </ligand>
</feature>
<feature type="binding site" evidence="1">
    <location>
        <position position="137"/>
    </location>
    <ligand>
        <name>CTP</name>
        <dbReference type="ChEBI" id="CHEBI:37563"/>
    </ligand>
</feature>
<feature type="binding site" evidence="1">
    <location>
        <position position="140"/>
    </location>
    <ligand>
        <name>ATP</name>
        <dbReference type="ChEBI" id="CHEBI:30616"/>
    </ligand>
</feature>
<feature type="binding site" evidence="1">
    <location>
        <position position="140"/>
    </location>
    <ligand>
        <name>CTP</name>
        <dbReference type="ChEBI" id="CHEBI:37563"/>
    </ligand>
</feature>
<protein>
    <recommendedName>
        <fullName evidence="1">CCA-adding enzyme</fullName>
        <ecNumber evidence="1">2.7.7.72</ecNumber>
    </recommendedName>
    <alternativeName>
        <fullName evidence="1">CCA tRNA nucleotidyltransferase</fullName>
    </alternativeName>
    <alternativeName>
        <fullName evidence="1">tRNA CCA-pyrophosphorylase</fullName>
    </alternativeName>
    <alternativeName>
        <fullName evidence="1">tRNA adenylyl-/cytidylyl- transferase</fullName>
    </alternativeName>
    <alternativeName>
        <fullName evidence="1">tRNA nucleotidyltransferase</fullName>
    </alternativeName>
    <alternativeName>
        <fullName evidence="1">tRNA-NT</fullName>
    </alternativeName>
</protein>
<sequence length="414" mass="48811">MKIYLVGGAVRDSLLNLPVKDKDWVVVGGTEKILLERNFQQVGKDFPVFLHPETHEEYALARKERKSGKGYTGFDTDCNSDVTLEEDLIRRDLTINAIAQDEYGNYIDPFQGKKDIECGLIRHVSESFIEDPLRVLRVARFAATLVHLGFKIAEETMLLMCIIVKKQELSYLTSNRIWNETEKALKTLNPHVYFQVLYECNALHFFFPEMYFLYEKKNFLNRSFFKKFCNKNIILMGLAEISLLNKDIDVRFSYLCQFLSVNQIDRNYSKIFFDSYAASIIHSVCKRFKIPSYIRDIAVLNTGFYFFLNTIHYQSSKNIINLFSKVDAWRKPDRVKKLAFLSNFNFLRNFKSEFFCIKSGCFLEKCFSVVKNVSIKLILKKGFKGYEIKQEITRLRIKKLEFWRIKNIKHRFYL</sequence>